<proteinExistence type="evidence at protein level"/>
<gene>
    <name type="primary">hbb</name>
</gene>
<evidence type="ECO:0000255" key="1">
    <source>
        <dbReference type="PROSITE-ProRule" id="PRU00238"/>
    </source>
</evidence>
<evidence type="ECO:0000269" key="2">
    <source>
    </source>
</evidence>
<evidence type="ECO:0000269" key="3">
    <source>
    </source>
</evidence>
<evidence type="ECO:0007744" key="4">
    <source>
        <dbReference type="PDB" id="1HBH"/>
    </source>
</evidence>
<evidence type="ECO:0007744" key="5">
    <source>
        <dbReference type="PDB" id="1PBX"/>
    </source>
</evidence>
<evidence type="ECO:0007744" key="6">
    <source>
        <dbReference type="PDB" id="1S5X"/>
    </source>
</evidence>
<evidence type="ECO:0007744" key="7">
    <source>
        <dbReference type="PDB" id="1S5Y"/>
    </source>
</evidence>
<evidence type="ECO:0007744" key="8">
    <source>
        <dbReference type="PDB" id="2H8D"/>
    </source>
</evidence>
<evidence type="ECO:0007744" key="9">
    <source>
        <dbReference type="PDB" id="2H8F"/>
    </source>
</evidence>
<evidence type="ECO:0007744" key="10">
    <source>
        <dbReference type="PDB" id="2PEG"/>
    </source>
</evidence>
<evidence type="ECO:0007744" key="11">
    <source>
        <dbReference type="PDB" id="3GKV"/>
    </source>
</evidence>
<evidence type="ECO:0007744" key="12">
    <source>
        <dbReference type="PDB" id="3GQG"/>
    </source>
</evidence>
<evidence type="ECO:0007744" key="13">
    <source>
        <dbReference type="PDB" id="4G51"/>
    </source>
</evidence>
<evidence type="ECO:0007744" key="14">
    <source>
        <dbReference type="PDB" id="4IRO"/>
    </source>
</evidence>
<evidence type="ECO:0007744" key="15">
    <source>
        <dbReference type="PDB" id="4ODC"/>
    </source>
</evidence>
<evidence type="ECO:0007829" key="16">
    <source>
        <dbReference type="PDB" id="2H8D"/>
    </source>
</evidence>
<evidence type="ECO:0007829" key="17">
    <source>
        <dbReference type="PDB" id="2H8F"/>
    </source>
</evidence>
<accession>P80044</accession>
<accession>O93350</accession>
<reference key="1">
    <citation type="journal article" date="1998" name="Proc. Natl. Acad. Sci. U.S.A.">
        <title>Antarctic fish hemoglobins: evidence for adaptive evolution at subzero temperature.</title>
        <authorList>
            <person name="Bargelloni L."/>
            <person name="Marcato S."/>
            <person name="Patarnello T."/>
        </authorList>
    </citation>
    <scope>NUCLEOTIDE SEQUENCE [MRNA]</scope>
</reference>
<reference key="2">
    <citation type="journal article" date="1992" name="J. Mol. Biol.">
        <title>Haemoglobin of the antarctic fish Pagothenia bernacchii. Amino acid sequence, oxygen equilibria and crystal structure of its carbonmonoxy derivative.</title>
        <authorList>
            <person name="Camardella L."/>
            <person name="Caruso C."/>
            <person name="D'Avino R."/>
            <person name="di Prisco G."/>
            <person name="Rutigliano B."/>
            <person name="Tamburrini M."/>
            <person name="Fermi G."/>
            <person name="Perutz M.F."/>
        </authorList>
    </citation>
    <scope>PROTEIN SEQUENCE OF 2-147</scope>
    <scope>FUNCTION</scope>
    <scope>SUBUNIT</scope>
    <scope>X-RAY CRYSTALLOGRAPHY (2.5 ANGSTROMS)</scope>
    <source>
        <tissue>Blood</tissue>
    </source>
</reference>
<reference key="3">
    <citation type="journal article" date="1995" name="J. Mol. Biol.">
        <title>Structure of deoxyhaemoglobin of the antarctic fish Pagothenia bernacchii with an analysis of the structural basis of the Root effect by comparison of the liganded and unliganded haemoglobin structures.</title>
        <authorList>
            <person name="Ito N."/>
            <person name="Komiyama N.H."/>
            <person name="Fermi G."/>
        </authorList>
    </citation>
    <scope>X-RAY CRYSTALLOGRAPHY (2.20 ANGSTROMS) OF 2-147 IN COMPLEX WITH HEME</scope>
</reference>
<name>HBB_TREBE</name>
<sequence length="147" mass="16264">MVEWTDKERSIISDIFSHMDYDDIGPKALSRCLIVYPWTQRHFSGFGNLYNAEAIIGNANVAAHGIKVLHGLDRGVKNMDNIAATYADLSTLHSEKLHVDPDNFKLLSDCITIVLAAKMGHAFTAETQGAFQKFLAVVVSALGKQYH</sequence>
<organism>
    <name type="scientific">Trematomus bernacchii</name>
    <name type="common">Emerald rockcod</name>
    <name type="synonym">Pseudotrematomus bernacchii</name>
    <dbReference type="NCBI Taxonomy" id="40690"/>
    <lineage>
        <taxon>Eukaryota</taxon>
        <taxon>Metazoa</taxon>
        <taxon>Chordata</taxon>
        <taxon>Craniata</taxon>
        <taxon>Vertebrata</taxon>
        <taxon>Euteleostomi</taxon>
        <taxon>Actinopterygii</taxon>
        <taxon>Neopterygii</taxon>
        <taxon>Teleostei</taxon>
        <taxon>Neoteleostei</taxon>
        <taxon>Acanthomorphata</taxon>
        <taxon>Eupercaria</taxon>
        <taxon>Perciformes</taxon>
        <taxon>Notothenioidei</taxon>
        <taxon>Nototheniidae</taxon>
        <taxon>Trematomus</taxon>
    </lineage>
</organism>
<feature type="initiator methionine" description="Removed" evidence="2">
    <location>
        <position position="1"/>
    </location>
</feature>
<feature type="chain" id="PRO_0000053046" description="Hemoglobin subunit beta">
    <location>
        <begin position="2"/>
        <end position="147"/>
    </location>
</feature>
<feature type="domain" description="Globin" evidence="1">
    <location>
        <begin position="3"/>
        <end position="147"/>
    </location>
</feature>
<feature type="binding site" description="distal binding residue" evidence="6 7 10 14">
    <location>
        <position position="64"/>
    </location>
    <ligand>
        <name>heme b</name>
        <dbReference type="ChEBI" id="CHEBI:60344"/>
    </ligand>
    <ligandPart>
        <name>Fe</name>
        <dbReference type="ChEBI" id="CHEBI:18248"/>
    </ligandPart>
</feature>
<feature type="binding site" description="proximal binding residue" evidence="3 4 5 6 7 8 9 10 11 12 13 14 15">
    <location>
        <position position="93"/>
    </location>
    <ligand>
        <name>heme b</name>
        <dbReference type="ChEBI" id="CHEBI:60344"/>
    </ligand>
    <ligandPart>
        <name>Fe</name>
        <dbReference type="ChEBI" id="CHEBI:18248"/>
    </ligandPart>
</feature>
<feature type="helix" evidence="17">
    <location>
        <begin position="6"/>
        <end position="18"/>
    </location>
</feature>
<feature type="helix" evidence="17">
    <location>
        <begin position="21"/>
        <end position="35"/>
    </location>
</feature>
<feature type="helix" evidence="17">
    <location>
        <begin position="37"/>
        <end position="42"/>
    </location>
</feature>
<feature type="helix" evidence="16">
    <location>
        <begin position="44"/>
        <end position="46"/>
    </location>
</feature>
<feature type="helix" evidence="17">
    <location>
        <begin position="52"/>
        <end position="56"/>
    </location>
</feature>
<feature type="helix" evidence="17">
    <location>
        <begin position="59"/>
        <end position="70"/>
    </location>
</feature>
<feature type="helix" evidence="17">
    <location>
        <begin position="73"/>
        <end position="76"/>
    </location>
</feature>
<feature type="turn" evidence="17">
    <location>
        <begin position="77"/>
        <end position="80"/>
    </location>
</feature>
<feature type="helix" evidence="17">
    <location>
        <begin position="82"/>
        <end position="85"/>
    </location>
</feature>
<feature type="helix" evidence="17">
    <location>
        <begin position="87"/>
        <end position="95"/>
    </location>
</feature>
<feature type="helix" evidence="17">
    <location>
        <begin position="102"/>
        <end position="119"/>
    </location>
</feature>
<feature type="helix" evidence="17">
    <location>
        <begin position="120"/>
        <end position="122"/>
    </location>
</feature>
<feature type="helix" evidence="17">
    <location>
        <begin position="125"/>
        <end position="144"/>
    </location>
</feature>
<dbReference type="EMBL" id="AF067570">
    <property type="protein sequence ID" value="AAC41388.1"/>
    <property type="molecule type" value="mRNA"/>
</dbReference>
<dbReference type="PIR" id="S21678">
    <property type="entry name" value="S21678"/>
</dbReference>
<dbReference type="PDB" id="1HBH">
    <property type="method" value="X-ray"/>
    <property type="resolution" value="2.20 A"/>
    <property type="chains" value="B/D=2-147"/>
</dbReference>
<dbReference type="PDB" id="1PBX">
    <property type="method" value="X-ray"/>
    <property type="resolution" value="2.50 A"/>
    <property type="chains" value="B=2-147"/>
</dbReference>
<dbReference type="PDB" id="1S5X">
    <property type="method" value="X-ray"/>
    <property type="resolution" value="2.40 A"/>
    <property type="chains" value="B=2-147"/>
</dbReference>
<dbReference type="PDB" id="1S5Y">
    <property type="method" value="X-ray"/>
    <property type="resolution" value="2.50 A"/>
    <property type="chains" value="B/D=2-147"/>
</dbReference>
<dbReference type="PDB" id="2H8D">
    <property type="method" value="X-ray"/>
    <property type="resolution" value="1.78 A"/>
    <property type="chains" value="B/D=2-147"/>
</dbReference>
<dbReference type="PDB" id="2H8F">
    <property type="method" value="X-ray"/>
    <property type="resolution" value="1.30 A"/>
    <property type="chains" value="B/D=2-147"/>
</dbReference>
<dbReference type="PDB" id="2PEG">
    <property type="method" value="X-ray"/>
    <property type="resolution" value="1.48 A"/>
    <property type="chains" value="B=2-147"/>
</dbReference>
<dbReference type="PDB" id="3GKV">
    <property type="method" value="X-ray"/>
    <property type="resolution" value="1.40 A"/>
    <property type="chains" value="B=2-147"/>
</dbReference>
<dbReference type="PDB" id="3GQG">
    <property type="method" value="X-ray"/>
    <property type="resolution" value="1.73 A"/>
    <property type="chains" value="B/D=2-147"/>
</dbReference>
<dbReference type="PDB" id="4G51">
    <property type="method" value="X-ray"/>
    <property type="resolution" value="2.50 A"/>
    <property type="chains" value="B/D=2-147"/>
</dbReference>
<dbReference type="PDB" id="4IRO">
    <property type="method" value="X-ray"/>
    <property type="resolution" value="2.20 A"/>
    <property type="chains" value="B/D=2-147"/>
</dbReference>
<dbReference type="PDB" id="4ODC">
    <property type="method" value="X-ray"/>
    <property type="resolution" value="1.54 A"/>
    <property type="chains" value="B=2-147"/>
</dbReference>
<dbReference type="PDBsum" id="1HBH"/>
<dbReference type="PDBsum" id="1PBX"/>
<dbReference type="PDBsum" id="1S5X"/>
<dbReference type="PDBsum" id="1S5Y"/>
<dbReference type="PDBsum" id="2H8D"/>
<dbReference type="PDBsum" id="2H8F"/>
<dbReference type="PDBsum" id="2PEG"/>
<dbReference type="PDBsum" id="3GKV"/>
<dbReference type="PDBsum" id="3GQG"/>
<dbReference type="PDBsum" id="4G51"/>
<dbReference type="PDBsum" id="4IRO"/>
<dbReference type="PDBsum" id="4ODC"/>
<dbReference type="SMR" id="P80044"/>
<dbReference type="MINT" id="P80044"/>
<dbReference type="OrthoDB" id="9886081at2759"/>
<dbReference type="EvolutionaryTrace" id="P80044"/>
<dbReference type="GO" id="GO:0072562">
    <property type="term" value="C:blood microparticle"/>
    <property type="evidence" value="ECO:0007669"/>
    <property type="project" value="TreeGrafter"/>
</dbReference>
<dbReference type="GO" id="GO:0031838">
    <property type="term" value="C:haptoglobin-hemoglobin complex"/>
    <property type="evidence" value="ECO:0007669"/>
    <property type="project" value="TreeGrafter"/>
</dbReference>
<dbReference type="GO" id="GO:0005833">
    <property type="term" value="C:hemoglobin complex"/>
    <property type="evidence" value="ECO:0007669"/>
    <property type="project" value="InterPro"/>
</dbReference>
<dbReference type="GO" id="GO:0031720">
    <property type="term" value="F:haptoglobin binding"/>
    <property type="evidence" value="ECO:0007669"/>
    <property type="project" value="TreeGrafter"/>
</dbReference>
<dbReference type="GO" id="GO:0020037">
    <property type="term" value="F:heme binding"/>
    <property type="evidence" value="ECO:0007669"/>
    <property type="project" value="InterPro"/>
</dbReference>
<dbReference type="GO" id="GO:0046872">
    <property type="term" value="F:metal ion binding"/>
    <property type="evidence" value="ECO:0007669"/>
    <property type="project" value="UniProtKB-KW"/>
</dbReference>
<dbReference type="GO" id="GO:0043177">
    <property type="term" value="F:organic acid binding"/>
    <property type="evidence" value="ECO:0007669"/>
    <property type="project" value="TreeGrafter"/>
</dbReference>
<dbReference type="GO" id="GO:0019825">
    <property type="term" value="F:oxygen binding"/>
    <property type="evidence" value="ECO:0007669"/>
    <property type="project" value="InterPro"/>
</dbReference>
<dbReference type="GO" id="GO:0005344">
    <property type="term" value="F:oxygen carrier activity"/>
    <property type="evidence" value="ECO:0007669"/>
    <property type="project" value="UniProtKB-KW"/>
</dbReference>
<dbReference type="GO" id="GO:0004601">
    <property type="term" value="F:peroxidase activity"/>
    <property type="evidence" value="ECO:0007669"/>
    <property type="project" value="TreeGrafter"/>
</dbReference>
<dbReference type="GO" id="GO:0042744">
    <property type="term" value="P:hydrogen peroxide catabolic process"/>
    <property type="evidence" value="ECO:0007669"/>
    <property type="project" value="TreeGrafter"/>
</dbReference>
<dbReference type="CDD" id="cd08925">
    <property type="entry name" value="Hb-beta-like"/>
    <property type="match status" value="1"/>
</dbReference>
<dbReference type="FunFam" id="1.10.490.10:FF:000001">
    <property type="entry name" value="Hemoglobin subunit beta"/>
    <property type="match status" value="1"/>
</dbReference>
<dbReference type="Gene3D" id="1.10.490.10">
    <property type="entry name" value="Globins"/>
    <property type="match status" value="1"/>
</dbReference>
<dbReference type="InterPro" id="IPR000971">
    <property type="entry name" value="Globin"/>
</dbReference>
<dbReference type="InterPro" id="IPR009050">
    <property type="entry name" value="Globin-like_sf"/>
</dbReference>
<dbReference type="InterPro" id="IPR012292">
    <property type="entry name" value="Globin/Proto"/>
</dbReference>
<dbReference type="InterPro" id="IPR002337">
    <property type="entry name" value="Hemoglobin_b"/>
</dbReference>
<dbReference type="InterPro" id="IPR050056">
    <property type="entry name" value="Hemoglobin_oxygen_transport"/>
</dbReference>
<dbReference type="PANTHER" id="PTHR11442">
    <property type="entry name" value="HEMOGLOBIN FAMILY MEMBER"/>
    <property type="match status" value="1"/>
</dbReference>
<dbReference type="PANTHER" id="PTHR11442:SF7">
    <property type="entry name" value="HEMOGLOBIN SUBUNIT EPSILON"/>
    <property type="match status" value="1"/>
</dbReference>
<dbReference type="Pfam" id="PF00042">
    <property type="entry name" value="Globin"/>
    <property type="match status" value="1"/>
</dbReference>
<dbReference type="PRINTS" id="PR00814">
    <property type="entry name" value="BETAHAEM"/>
</dbReference>
<dbReference type="SUPFAM" id="SSF46458">
    <property type="entry name" value="Globin-like"/>
    <property type="match status" value="1"/>
</dbReference>
<dbReference type="PROSITE" id="PS01033">
    <property type="entry name" value="GLOBIN"/>
    <property type="match status" value="1"/>
</dbReference>
<comment type="function">
    <text evidence="2">Involved in oxygen transport from gills to the various peripheral tissues.</text>
</comment>
<comment type="subunit">
    <text evidence="2">Hb1 is a heterotetramer of two alpha chains and two beta chains.</text>
</comment>
<comment type="tissue specificity">
    <text>Red blood cells.</text>
</comment>
<comment type="miscellaneous">
    <text>This fish has three hemoglobins: Hb1 (major) and two minor hemoglobins (about 1-2% of the total). Hb1 has a strong alkaline Bohr effect, and at low pH exhibits the reduced ligand affinity and cooperativity that comprise the Root effect.</text>
</comment>
<comment type="similarity">
    <text evidence="1">Belongs to the globin family.</text>
</comment>
<keyword id="KW-0002">3D-structure</keyword>
<keyword id="KW-0903">Direct protein sequencing</keyword>
<keyword id="KW-0349">Heme</keyword>
<keyword id="KW-0408">Iron</keyword>
<keyword id="KW-0479">Metal-binding</keyword>
<keyword id="KW-0561">Oxygen transport</keyword>
<keyword id="KW-0813">Transport</keyword>
<protein>
    <recommendedName>
        <fullName>Hemoglobin subunit beta</fullName>
    </recommendedName>
    <alternativeName>
        <fullName>Beta-globin</fullName>
    </alternativeName>
    <alternativeName>
        <fullName>Hemoglobin beta chain</fullName>
    </alternativeName>
</protein>